<comment type="function">
    <text evidence="1">Plays an important role in the de novo pathway of purine nucleotide biosynthesis. Catalyzes the first committed step in the biosynthesis of AMP from IMP.</text>
</comment>
<comment type="catalytic activity">
    <reaction evidence="1">
        <text>IMP + L-aspartate + GTP = N(6)-(1,2-dicarboxyethyl)-AMP + GDP + phosphate + 2 H(+)</text>
        <dbReference type="Rhea" id="RHEA:15753"/>
        <dbReference type="ChEBI" id="CHEBI:15378"/>
        <dbReference type="ChEBI" id="CHEBI:29991"/>
        <dbReference type="ChEBI" id="CHEBI:37565"/>
        <dbReference type="ChEBI" id="CHEBI:43474"/>
        <dbReference type="ChEBI" id="CHEBI:57567"/>
        <dbReference type="ChEBI" id="CHEBI:58053"/>
        <dbReference type="ChEBI" id="CHEBI:58189"/>
        <dbReference type="EC" id="6.3.4.4"/>
    </reaction>
</comment>
<comment type="cofactor">
    <cofactor evidence="1">
        <name>Mg(2+)</name>
        <dbReference type="ChEBI" id="CHEBI:18420"/>
    </cofactor>
    <text evidence="1">Binds 1 Mg(2+) ion per subunit.</text>
</comment>
<comment type="pathway">
    <text evidence="1">Purine metabolism; AMP biosynthesis via de novo pathway; AMP from IMP: step 1/2.</text>
</comment>
<comment type="subunit">
    <text evidence="1">Homodimer.</text>
</comment>
<comment type="subcellular location">
    <subcellularLocation>
        <location evidence="1">Cytoplasm</location>
    </subcellularLocation>
</comment>
<comment type="similarity">
    <text evidence="1">Belongs to the adenylosuccinate synthetase family.</text>
</comment>
<evidence type="ECO:0000255" key="1">
    <source>
        <dbReference type="HAMAP-Rule" id="MF_00011"/>
    </source>
</evidence>
<sequence length="425" mass="47057">MPASLVVGTQWGDEGKAKVIDFLSKDTDIIVRYQGGANAGHTVVVHGKKYVFHLVPSGVIYDQTICVIGNGVVLDPLFFIEECDRLQKEGFPVFDKLLLSDACHLLFPYHSQIDSARETTLSQEHKIGTTKKGIGICYADKMMRTGLRVGDLLDTSYQTRLKHLVDEKNRELDKLYGMPPVSYNDINEGLKFFLSKVKKNIINTAYYLDTELKKGKRVLLEGAQGTGLDVDFGTYPYVTSSNPTTGGALIGTGIPFQHLKHVIGITKAYTTRVGEGPFPTELLGEAGEKLRQKGGEFGATTGRPRRCGWFDVEMLKHSVRINGITSIALTKIDILSDYDTIPVATGYKLNGKTLDCFPSQGLDKVEVIYEEFPGWKSDISGICEFQKLPEKCKNYISALEKWIGVKINLVSTGPDRKDTIHGDSF</sequence>
<name>PURA_LEPIN</name>
<reference key="1">
    <citation type="journal article" date="2003" name="Nature">
        <title>Unique physiological and pathogenic features of Leptospira interrogans revealed by whole-genome sequencing.</title>
        <authorList>
            <person name="Ren S.-X."/>
            <person name="Fu G."/>
            <person name="Jiang X.-G."/>
            <person name="Zeng R."/>
            <person name="Miao Y.-G."/>
            <person name="Xu H."/>
            <person name="Zhang Y.-X."/>
            <person name="Xiong H."/>
            <person name="Lu G."/>
            <person name="Lu L.-F."/>
            <person name="Jiang H.-Q."/>
            <person name="Jia J."/>
            <person name="Tu Y.-F."/>
            <person name="Jiang J.-X."/>
            <person name="Gu W.-Y."/>
            <person name="Zhang Y.-Q."/>
            <person name="Cai Z."/>
            <person name="Sheng H.-H."/>
            <person name="Yin H.-F."/>
            <person name="Zhang Y."/>
            <person name="Zhu G.-F."/>
            <person name="Wan M."/>
            <person name="Huang H.-L."/>
            <person name="Qian Z."/>
            <person name="Wang S.-Y."/>
            <person name="Ma W."/>
            <person name="Yao Z.-J."/>
            <person name="Shen Y."/>
            <person name="Qiang B.-Q."/>
            <person name="Xia Q.-C."/>
            <person name="Guo X.-K."/>
            <person name="Danchin A."/>
            <person name="Saint Girons I."/>
            <person name="Somerville R.L."/>
            <person name="Wen Y.-M."/>
            <person name="Shi M.-H."/>
            <person name="Chen Z."/>
            <person name="Xu J.-G."/>
            <person name="Zhao G.-P."/>
        </authorList>
    </citation>
    <scope>NUCLEOTIDE SEQUENCE [LARGE SCALE GENOMIC DNA]</scope>
    <source>
        <strain>56601</strain>
    </source>
</reference>
<proteinExistence type="inferred from homology"/>
<keyword id="KW-0963">Cytoplasm</keyword>
<keyword id="KW-0342">GTP-binding</keyword>
<keyword id="KW-0436">Ligase</keyword>
<keyword id="KW-0460">Magnesium</keyword>
<keyword id="KW-0479">Metal-binding</keyword>
<keyword id="KW-0547">Nucleotide-binding</keyword>
<keyword id="KW-0658">Purine biosynthesis</keyword>
<keyword id="KW-1185">Reference proteome</keyword>
<feature type="chain" id="PRO_0000095193" description="Adenylosuccinate synthetase">
    <location>
        <begin position="1"/>
        <end position="425"/>
    </location>
</feature>
<feature type="active site" description="Proton acceptor" evidence="1">
    <location>
        <position position="13"/>
    </location>
</feature>
<feature type="active site" description="Proton donor" evidence="1">
    <location>
        <position position="41"/>
    </location>
</feature>
<feature type="binding site" evidence="1">
    <location>
        <begin position="12"/>
        <end position="18"/>
    </location>
    <ligand>
        <name>GTP</name>
        <dbReference type="ChEBI" id="CHEBI:37565"/>
    </ligand>
</feature>
<feature type="binding site" description="in other chain" evidence="1">
    <location>
        <begin position="13"/>
        <end position="16"/>
    </location>
    <ligand>
        <name>IMP</name>
        <dbReference type="ChEBI" id="CHEBI:58053"/>
        <note>ligand shared between dimeric partners</note>
    </ligand>
</feature>
<feature type="binding site" evidence="1">
    <location>
        <position position="13"/>
    </location>
    <ligand>
        <name>Mg(2+)</name>
        <dbReference type="ChEBI" id="CHEBI:18420"/>
    </ligand>
</feature>
<feature type="binding site" description="in other chain" evidence="1">
    <location>
        <begin position="38"/>
        <end position="41"/>
    </location>
    <ligand>
        <name>IMP</name>
        <dbReference type="ChEBI" id="CHEBI:58053"/>
        <note>ligand shared between dimeric partners</note>
    </ligand>
</feature>
<feature type="binding site" evidence="1">
    <location>
        <begin position="40"/>
        <end position="42"/>
    </location>
    <ligand>
        <name>GTP</name>
        <dbReference type="ChEBI" id="CHEBI:37565"/>
    </ligand>
</feature>
<feature type="binding site" evidence="1">
    <location>
        <position position="40"/>
    </location>
    <ligand>
        <name>Mg(2+)</name>
        <dbReference type="ChEBI" id="CHEBI:18420"/>
    </ligand>
</feature>
<feature type="binding site" description="in other chain" evidence="1">
    <location>
        <position position="130"/>
    </location>
    <ligand>
        <name>IMP</name>
        <dbReference type="ChEBI" id="CHEBI:58053"/>
        <note>ligand shared between dimeric partners</note>
    </ligand>
</feature>
<feature type="binding site" evidence="1">
    <location>
        <position position="144"/>
    </location>
    <ligand>
        <name>IMP</name>
        <dbReference type="ChEBI" id="CHEBI:58053"/>
        <note>ligand shared between dimeric partners</note>
    </ligand>
</feature>
<feature type="binding site" description="in other chain" evidence="1">
    <location>
        <position position="224"/>
    </location>
    <ligand>
        <name>IMP</name>
        <dbReference type="ChEBI" id="CHEBI:58053"/>
        <note>ligand shared between dimeric partners</note>
    </ligand>
</feature>
<feature type="binding site" description="in other chain" evidence="1">
    <location>
        <position position="239"/>
    </location>
    <ligand>
        <name>IMP</name>
        <dbReference type="ChEBI" id="CHEBI:58053"/>
        <note>ligand shared between dimeric partners</note>
    </ligand>
</feature>
<feature type="binding site" evidence="1">
    <location>
        <begin position="299"/>
        <end position="305"/>
    </location>
    <ligand>
        <name>substrate</name>
    </ligand>
</feature>
<feature type="binding site" description="in other chain" evidence="1">
    <location>
        <position position="303"/>
    </location>
    <ligand>
        <name>IMP</name>
        <dbReference type="ChEBI" id="CHEBI:58053"/>
        <note>ligand shared between dimeric partners</note>
    </ligand>
</feature>
<feature type="binding site" evidence="1">
    <location>
        <position position="305"/>
    </location>
    <ligand>
        <name>GTP</name>
        <dbReference type="ChEBI" id="CHEBI:37565"/>
    </ligand>
</feature>
<feature type="binding site" evidence="1">
    <location>
        <begin position="331"/>
        <end position="333"/>
    </location>
    <ligand>
        <name>GTP</name>
        <dbReference type="ChEBI" id="CHEBI:37565"/>
    </ligand>
</feature>
<feature type="binding site" evidence="1">
    <location>
        <begin position="411"/>
        <end position="413"/>
    </location>
    <ligand>
        <name>GTP</name>
        <dbReference type="ChEBI" id="CHEBI:37565"/>
    </ligand>
</feature>
<gene>
    <name evidence="1" type="primary">purA</name>
    <name type="ordered locus">LA_1110</name>
</gene>
<dbReference type="EC" id="6.3.4.4" evidence="1"/>
<dbReference type="EMBL" id="AE010300">
    <property type="protein sequence ID" value="AAN48309.1"/>
    <property type="molecule type" value="Genomic_DNA"/>
</dbReference>
<dbReference type="RefSeq" id="NP_711291.1">
    <property type="nucleotide sequence ID" value="NC_004342.2"/>
</dbReference>
<dbReference type="RefSeq" id="WP_001111751.1">
    <property type="nucleotide sequence ID" value="NC_004342.2"/>
</dbReference>
<dbReference type="SMR" id="Q8F738"/>
<dbReference type="FunCoup" id="Q8F738">
    <property type="interactions" value="513"/>
</dbReference>
<dbReference type="STRING" id="189518.LA_1110"/>
<dbReference type="PaxDb" id="189518-LA_1110"/>
<dbReference type="EnsemblBacteria" id="AAN48309">
    <property type="protein sequence ID" value="AAN48309"/>
    <property type="gene ID" value="LA_1110"/>
</dbReference>
<dbReference type="KEGG" id="lil:LA_1110"/>
<dbReference type="PATRIC" id="fig|189518.3.peg.1101"/>
<dbReference type="HOGENOM" id="CLU_029848_0_0_12"/>
<dbReference type="InParanoid" id="Q8F738"/>
<dbReference type="OrthoDB" id="9807553at2"/>
<dbReference type="UniPathway" id="UPA00075">
    <property type="reaction ID" value="UER00335"/>
</dbReference>
<dbReference type="Proteomes" id="UP000001408">
    <property type="component" value="Chromosome I"/>
</dbReference>
<dbReference type="GO" id="GO:0005737">
    <property type="term" value="C:cytoplasm"/>
    <property type="evidence" value="ECO:0000318"/>
    <property type="project" value="GO_Central"/>
</dbReference>
<dbReference type="GO" id="GO:0004019">
    <property type="term" value="F:adenylosuccinate synthase activity"/>
    <property type="evidence" value="ECO:0000318"/>
    <property type="project" value="GO_Central"/>
</dbReference>
<dbReference type="GO" id="GO:0005525">
    <property type="term" value="F:GTP binding"/>
    <property type="evidence" value="ECO:0007669"/>
    <property type="project" value="UniProtKB-UniRule"/>
</dbReference>
<dbReference type="GO" id="GO:0000287">
    <property type="term" value="F:magnesium ion binding"/>
    <property type="evidence" value="ECO:0007669"/>
    <property type="project" value="UniProtKB-UniRule"/>
</dbReference>
<dbReference type="GO" id="GO:0044208">
    <property type="term" value="P:'de novo' AMP biosynthetic process"/>
    <property type="evidence" value="ECO:0000318"/>
    <property type="project" value="GO_Central"/>
</dbReference>
<dbReference type="GO" id="GO:0046040">
    <property type="term" value="P:IMP metabolic process"/>
    <property type="evidence" value="ECO:0000318"/>
    <property type="project" value="GO_Central"/>
</dbReference>
<dbReference type="CDD" id="cd03108">
    <property type="entry name" value="AdSS"/>
    <property type="match status" value="1"/>
</dbReference>
<dbReference type="FunFam" id="1.10.300.10:FF:000001">
    <property type="entry name" value="Adenylosuccinate synthetase"/>
    <property type="match status" value="1"/>
</dbReference>
<dbReference type="FunFam" id="3.90.170.10:FF:000001">
    <property type="entry name" value="Adenylosuccinate synthetase"/>
    <property type="match status" value="1"/>
</dbReference>
<dbReference type="Gene3D" id="3.40.440.10">
    <property type="entry name" value="Adenylosuccinate Synthetase, subunit A, domain 1"/>
    <property type="match status" value="1"/>
</dbReference>
<dbReference type="Gene3D" id="1.10.300.10">
    <property type="entry name" value="Adenylosuccinate Synthetase, subunit A, domain 2"/>
    <property type="match status" value="1"/>
</dbReference>
<dbReference type="Gene3D" id="3.90.170.10">
    <property type="entry name" value="Adenylosuccinate Synthetase, subunit A, domain 3"/>
    <property type="match status" value="1"/>
</dbReference>
<dbReference type="HAMAP" id="MF_00011">
    <property type="entry name" value="Adenylosucc_synth"/>
    <property type="match status" value="1"/>
</dbReference>
<dbReference type="InterPro" id="IPR018220">
    <property type="entry name" value="Adenylosuccin_syn_GTP-bd"/>
</dbReference>
<dbReference type="InterPro" id="IPR042109">
    <property type="entry name" value="Adenylosuccinate_synth_dom1"/>
</dbReference>
<dbReference type="InterPro" id="IPR042110">
    <property type="entry name" value="Adenylosuccinate_synth_dom2"/>
</dbReference>
<dbReference type="InterPro" id="IPR042111">
    <property type="entry name" value="Adenylosuccinate_synth_dom3"/>
</dbReference>
<dbReference type="InterPro" id="IPR001114">
    <property type="entry name" value="Adenylosuccinate_synthetase"/>
</dbReference>
<dbReference type="InterPro" id="IPR027417">
    <property type="entry name" value="P-loop_NTPase"/>
</dbReference>
<dbReference type="NCBIfam" id="NF002223">
    <property type="entry name" value="PRK01117.1"/>
    <property type="match status" value="1"/>
</dbReference>
<dbReference type="NCBIfam" id="TIGR00184">
    <property type="entry name" value="purA"/>
    <property type="match status" value="1"/>
</dbReference>
<dbReference type="PANTHER" id="PTHR11846">
    <property type="entry name" value="ADENYLOSUCCINATE SYNTHETASE"/>
    <property type="match status" value="1"/>
</dbReference>
<dbReference type="PANTHER" id="PTHR11846:SF0">
    <property type="entry name" value="ADENYLOSUCCINATE SYNTHETASE"/>
    <property type="match status" value="1"/>
</dbReference>
<dbReference type="Pfam" id="PF00709">
    <property type="entry name" value="Adenylsucc_synt"/>
    <property type="match status" value="1"/>
</dbReference>
<dbReference type="SMART" id="SM00788">
    <property type="entry name" value="Adenylsucc_synt"/>
    <property type="match status" value="1"/>
</dbReference>
<dbReference type="SUPFAM" id="SSF52540">
    <property type="entry name" value="P-loop containing nucleoside triphosphate hydrolases"/>
    <property type="match status" value="1"/>
</dbReference>
<dbReference type="PROSITE" id="PS01266">
    <property type="entry name" value="ADENYLOSUCCIN_SYN_1"/>
    <property type="match status" value="1"/>
</dbReference>
<protein>
    <recommendedName>
        <fullName evidence="1">Adenylosuccinate synthetase</fullName>
        <shortName evidence="1">AMPSase</shortName>
        <shortName evidence="1">AdSS</shortName>
        <ecNumber evidence="1">6.3.4.4</ecNumber>
    </recommendedName>
    <alternativeName>
        <fullName evidence="1">IMP--aspartate ligase</fullName>
    </alternativeName>
</protein>
<accession>Q8F738</accession>
<organism>
    <name type="scientific">Leptospira interrogans serogroup Icterohaemorrhagiae serovar Lai (strain 56601)</name>
    <dbReference type="NCBI Taxonomy" id="189518"/>
    <lineage>
        <taxon>Bacteria</taxon>
        <taxon>Pseudomonadati</taxon>
        <taxon>Spirochaetota</taxon>
        <taxon>Spirochaetia</taxon>
        <taxon>Leptospirales</taxon>
        <taxon>Leptospiraceae</taxon>
        <taxon>Leptospira</taxon>
    </lineage>
</organism>